<feature type="chain" id="PRO_1000119760" description="Chaperone protein DnaK">
    <location>
        <begin position="1"/>
        <end position="641"/>
    </location>
</feature>
<feature type="region of interest" description="Disordered" evidence="2">
    <location>
        <begin position="604"/>
        <end position="625"/>
    </location>
</feature>
<feature type="compositionally biased region" description="Low complexity" evidence="2">
    <location>
        <begin position="604"/>
        <end position="622"/>
    </location>
</feature>
<feature type="modified residue" description="Phosphothreonine; by autocatalysis" evidence="1">
    <location>
        <position position="201"/>
    </location>
</feature>
<reference key="1">
    <citation type="submission" date="2008-06" db="EMBL/GenBank/DDBJ databases">
        <title>Complete sequence of Stenotrophomonas maltophilia R551-3.</title>
        <authorList>
            <consortium name="US DOE Joint Genome Institute"/>
            <person name="Lucas S."/>
            <person name="Copeland A."/>
            <person name="Lapidus A."/>
            <person name="Glavina del Rio T."/>
            <person name="Dalin E."/>
            <person name="Tice H."/>
            <person name="Pitluck S."/>
            <person name="Chain P."/>
            <person name="Malfatti S."/>
            <person name="Shin M."/>
            <person name="Vergez L."/>
            <person name="Lang D."/>
            <person name="Schmutz J."/>
            <person name="Larimer F."/>
            <person name="Land M."/>
            <person name="Hauser L."/>
            <person name="Kyrpides N."/>
            <person name="Mikhailova N."/>
            <person name="Taghavi S."/>
            <person name="Monchy S."/>
            <person name="Newman L."/>
            <person name="Vangronsveld J."/>
            <person name="van der Lelie D."/>
            <person name="Richardson P."/>
        </authorList>
    </citation>
    <scope>NUCLEOTIDE SEQUENCE [LARGE SCALE GENOMIC DNA]</scope>
    <source>
        <strain>R551-3</strain>
    </source>
</reference>
<evidence type="ECO:0000255" key="1">
    <source>
        <dbReference type="HAMAP-Rule" id="MF_00332"/>
    </source>
</evidence>
<evidence type="ECO:0000256" key="2">
    <source>
        <dbReference type="SAM" id="MobiDB-lite"/>
    </source>
</evidence>
<sequence>MGKIIGIDLGTTNSCVAIMDGGKARVIENSEGDRTTPSIVAYTKDGEVLVGASAKRQAVTNPKNTFYAVKRLIGRKFTDAEVQKDIAHVPYSILAHDNGDAWVATSDAKKMAPQEISAKVLEKMKKTAEDFLGEKVTEAVITVPAYFNDSQRQATKDAGRIAGLDVKRIINEPTAAALAYGLDKGDNKDRKIVVYDLGGGTFDVSVIEIANVDGEKQFEVLATNGDTFLGGEDFDNRVIEYLVEEFNKDQGIDLRKDPLALQRLKDAAERAKIELSSAQQTEVNLPYVTADASGPKHLNIKLTRAKLESLVEELIRKSIEPCRVALNDAGLRSSDISEVILVGGQTRMPKVQQAVTEFFGKEPRKDVNPDEAVALGAAIQGGVLGGDVKDVLLLDVTPLSLGIETMGGVFTKIIEKNTTIPTKASQVFSTAEDNQSAVTVHVLQGEREQARFNKSLAKFDLSGIEPAPRGLPQVEVSFDIDANGILHVSAKDKKTNKEQKVEIKAGSGLSEEEIARMVADAEANREEDKKFQELVQARNQADALIHGTRSAITEHGSKVGGDVIGKVEAALADLETAMKGDDKAQIEAKSKVLEEAGQSLFAAASAEQGGAAPGADAGNAGKAQDDVVDAEFTEVKDDKKS</sequence>
<dbReference type="EMBL" id="CP001111">
    <property type="protein sequence ID" value="ACF51305.1"/>
    <property type="molecule type" value="Genomic_DNA"/>
</dbReference>
<dbReference type="RefSeq" id="WP_012510757.1">
    <property type="nucleotide sequence ID" value="NC_011071.1"/>
</dbReference>
<dbReference type="SMR" id="B4SSQ6"/>
<dbReference type="STRING" id="391008.Smal_1600"/>
<dbReference type="KEGG" id="smt:Smal_1600"/>
<dbReference type="eggNOG" id="COG0443">
    <property type="taxonomic scope" value="Bacteria"/>
</dbReference>
<dbReference type="HOGENOM" id="CLU_005965_2_4_6"/>
<dbReference type="OrthoDB" id="9766019at2"/>
<dbReference type="Proteomes" id="UP000001867">
    <property type="component" value="Chromosome"/>
</dbReference>
<dbReference type="GO" id="GO:0005524">
    <property type="term" value="F:ATP binding"/>
    <property type="evidence" value="ECO:0007669"/>
    <property type="project" value="UniProtKB-UniRule"/>
</dbReference>
<dbReference type="GO" id="GO:0140662">
    <property type="term" value="F:ATP-dependent protein folding chaperone"/>
    <property type="evidence" value="ECO:0007669"/>
    <property type="project" value="InterPro"/>
</dbReference>
<dbReference type="GO" id="GO:0051082">
    <property type="term" value="F:unfolded protein binding"/>
    <property type="evidence" value="ECO:0007669"/>
    <property type="project" value="InterPro"/>
</dbReference>
<dbReference type="CDD" id="cd10234">
    <property type="entry name" value="ASKHA_NBD_HSP70_DnaK-like"/>
    <property type="match status" value="1"/>
</dbReference>
<dbReference type="FunFam" id="2.60.34.10:FF:000014">
    <property type="entry name" value="Chaperone protein DnaK HSP70"/>
    <property type="match status" value="1"/>
</dbReference>
<dbReference type="FunFam" id="3.30.30.30:FF:000003">
    <property type="entry name" value="Heat shock protein 9"/>
    <property type="match status" value="1"/>
</dbReference>
<dbReference type="FunFam" id="1.20.1270.10:FF:000001">
    <property type="entry name" value="Molecular chaperone DnaK"/>
    <property type="match status" value="1"/>
</dbReference>
<dbReference type="FunFam" id="3.30.420.40:FF:000004">
    <property type="entry name" value="Molecular chaperone DnaK"/>
    <property type="match status" value="1"/>
</dbReference>
<dbReference type="FunFam" id="3.90.640.10:FF:000003">
    <property type="entry name" value="Molecular chaperone DnaK"/>
    <property type="match status" value="1"/>
</dbReference>
<dbReference type="Gene3D" id="1.20.1270.10">
    <property type="match status" value="1"/>
</dbReference>
<dbReference type="Gene3D" id="3.30.420.40">
    <property type="match status" value="2"/>
</dbReference>
<dbReference type="Gene3D" id="3.90.640.10">
    <property type="entry name" value="Actin, Chain A, domain 4"/>
    <property type="match status" value="1"/>
</dbReference>
<dbReference type="Gene3D" id="2.60.34.10">
    <property type="entry name" value="Substrate Binding Domain Of DNAk, Chain A, domain 1"/>
    <property type="match status" value="1"/>
</dbReference>
<dbReference type="HAMAP" id="MF_00332">
    <property type="entry name" value="DnaK"/>
    <property type="match status" value="1"/>
</dbReference>
<dbReference type="InterPro" id="IPR043129">
    <property type="entry name" value="ATPase_NBD"/>
</dbReference>
<dbReference type="InterPro" id="IPR012725">
    <property type="entry name" value="Chaperone_DnaK"/>
</dbReference>
<dbReference type="InterPro" id="IPR018181">
    <property type="entry name" value="Heat_shock_70_CS"/>
</dbReference>
<dbReference type="InterPro" id="IPR029048">
    <property type="entry name" value="HSP70_C_sf"/>
</dbReference>
<dbReference type="InterPro" id="IPR029047">
    <property type="entry name" value="HSP70_peptide-bd_sf"/>
</dbReference>
<dbReference type="InterPro" id="IPR013126">
    <property type="entry name" value="Hsp_70_fam"/>
</dbReference>
<dbReference type="NCBIfam" id="NF001413">
    <property type="entry name" value="PRK00290.1"/>
    <property type="match status" value="1"/>
</dbReference>
<dbReference type="NCBIfam" id="NF003520">
    <property type="entry name" value="PRK05183.1"/>
    <property type="match status" value="1"/>
</dbReference>
<dbReference type="NCBIfam" id="TIGR02350">
    <property type="entry name" value="prok_dnaK"/>
    <property type="match status" value="1"/>
</dbReference>
<dbReference type="PANTHER" id="PTHR19375">
    <property type="entry name" value="HEAT SHOCK PROTEIN 70KDA"/>
    <property type="match status" value="1"/>
</dbReference>
<dbReference type="Pfam" id="PF00012">
    <property type="entry name" value="HSP70"/>
    <property type="match status" value="1"/>
</dbReference>
<dbReference type="PRINTS" id="PR00301">
    <property type="entry name" value="HEATSHOCK70"/>
</dbReference>
<dbReference type="SUPFAM" id="SSF53067">
    <property type="entry name" value="Actin-like ATPase domain"/>
    <property type="match status" value="2"/>
</dbReference>
<dbReference type="SUPFAM" id="SSF100920">
    <property type="entry name" value="Heat shock protein 70kD (HSP70), peptide-binding domain"/>
    <property type="match status" value="1"/>
</dbReference>
<dbReference type="PROSITE" id="PS00297">
    <property type="entry name" value="HSP70_1"/>
    <property type="match status" value="1"/>
</dbReference>
<dbReference type="PROSITE" id="PS00329">
    <property type="entry name" value="HSP70_2"/>
    <property type="match status" value="1"/>
</dbReference>
<dbReference type="PROSITE" id="PS01036">
    <property type="entry name" value="HSP70_3"/>
    <property type="match status" value="1"/>
</dbReference>
<name>DNAK_STRM5</name>
<protein>
    <recommendedName>
        <fullName evidence="1">Chaperone protein DnaK</fullName>
    </recommendedName>
    <alternativeName>
        <fullName evidence="1">HSP70</fullName>
    </alternativeName>
    <alternativeName>
        <fullName evidence="1">Heat shock 70 kDa protein</fullName>
    </alternativeName>
    <alternativeName>
        <fullName evidence="1">Heat shock protein 70</fullName>
    </alternativeName>
</protein>
<organism>
    <name type="scientific">Stenotrophomonas maltophilia (strain R551-3)</name>
    <dbReference type="NCBI Taxonomy" id="391008"/>
    <lineage>
        <taxon>Bacteria</taxon>
        <taxon>Pseudomonadati</taxon>
        <taxon>Pseudomonadota</taxon>
        <taxon>Gammaproteobacteria</taxon>
        <taxon>Lysobacterales</taxon>
        <taxon>Lysobacteraceae</taxon>
        <taxon>Stenotrophomonas</taxon>
        <taxon>Stenotrophomonas maltophilia group</taxon>
    </lineage>
</organism>
<comment type="function">
    <text evidence="1">Acts as a chaperone.</text>
</comment>
<comment type="induction">
    <text evidence="1">By stress conditions e.g. heat shock.</text>
</comment>
<comment type="similarity">
    <text evidence="1">Belongs to the heat shock protein 70 family.</text>
</comment>
<keyword id="KW-0067">ATP-binding</keyword>
<keyword id="KW-0143">Chaperone</keyword>
<keyword id="KW-0547">Nucleotide-binding</keyword>
<keyword id="KW-0597">Phosphoprotein</keyword>
<keyword id="KW-0346">Stress response</keyword>
<accession>B4SSQ6</accession>
<gene>
    <name evidence="1" type="primary">dnaK</name>
    <name type="ordered locus">Smal_1600</name>
</gene>
<proteinExistence type="inferred from homology"/>